<organism>
    <name type="scientific">Shewanella frigidimarina (strain NCIMB 400)</name>
    <dbReference type="NCBI Taxonomy" id="318167"/>
    <lineage>
        <taxon>Bacteria</taxon>
        <taxon>Pseudomonadati</taxon>
        <taxon>Pseudomonadota</taxon>
        <taxon>Gammaproteobacteria</taxon>
        <taxon>Alteromonadales</taxon>
        <taxon>Shewanellaceae</taxon>
        <taxon>Shewanella</taxon>
    </lineage>
</organism>
<sequence length="197" mass="21031">MLERIRDSFTESIQTKIDAAEALPESIEKAAEMMVQCLLGGNKILSCGNGGSAGDAQHFSAELLNRYEIERPPLPAIALSCDTSTITAIANDYSYDEIFSKQIFALGQPGDILLAISTSGNSGNIIKAMEAALSRDMTIVALTGKDGGAMAGLMSAGDVEIRVPSNVTARIQEVHLLVIHCLCDNIDRTLFPQDEQA</sequence>
<comment type="function">
    <text evidence="1">Catalyzes the isomerization of sedoheptulose 7-phosphate in D-glycero-D-manno-heptose 7-phosphate.</text>
</comment>
<comment type="catalytic activity">
    <reaction evidence="1">
        <text>2 D-sedoheptulose 7-phosphate = D-glycero-alpha-D-manno-heptose 7-phosphate + D-glycero-beta-D-manno-heptose 7-phosphate</text>
        <dbReference type="Rhea" id="RHEA:27489"/>
        <dbReference type="ChEBI" id="CHEBI:57483"/>
        <dbReference type="ChEBI" id="CHEBI:60203"/>
        <dbReference type="ChEBI" id="CHEBI:60204"/>
        <dbReference type="EC" id="5.3.1.28"/>
    </reaction>
</comment>
<comment type="cofactor">
    <cofactor evidence="1">
        <name>Zn(2+)</name>
        <dbReference type="ChEBI" id="CHEBI:29105"/>
    </cofactor>
    <text evidence="1">Binds 1 zinc ion per subunit.</text>
</comment>
<comment type="pathway">
    <text evidence="1">Carbohydrate biosynthesis; D-glycero-D-manno-heptose 7-phosphate biosynthesis; D-glycero-alpha-D-manno-heptose 7-phosphate and D-glycero-beta-D-manno-heptose 7-phosphate from sedoheptulose 7-phosphate: step 1/1.</text>
</comment>
<comment type="subunit">
    <text evidence="1">Homotetramer.</text>
</comment>
<comment type="subcellular location">
    <subcellularLocation>
        <location evidence="1">Cytoplasm</location>
    </subcellularLocation>
</comment>
<comment type="miscellaneous">
    <text evidence="1">The reaction produces a racemic mixture of D-glycero-alpha-D-manno-heptose 7-phosphate and D-glycero-beta-D-manno-heptose 7-phosphate.</text>
</comment>
<comment type="similarity">
    <text evidence="1">Belongs to the SIS family. GmhA subfamily.</text>
</comment>
<accession>Q088R5</accession>
<name>GMHA_SHEFN</name>
<dbReference type="EC" id="5.3.1.28" evidence="1"/>
<dbReference type="EMBL" id="CP000447">
    <property type="protein sequence ID" value="ABI70250.1"/>
    <property type="molecule type" value="Genomic_DNA"/>
</dbReference>
<dbReference type="RefSeq" id="WP_011635877.1">
    <property type="nucleotide sequence ID" value="NC_008345.1"/>
</dbReference>
<dbReference type="SMR" id="Q088R5"/>
<dbReference type="STRING" id="318167.Sfri_0387"/>
<dbReference type="KEGG" id="sfr:Sfri_0387"/>
<dbReference type="eggNOG" id="COG0279">
    <property type="taxonomic scope" value="Bacteria"/>
</dbReference>
<dbReference type="HOGENOM" id="CLU_080999_4_0_6"/>
<dbReference type="OrthoDB" id="9810929at2"/>
<dbReference type="UniPathway" id="UPA00041">
    <property type="reaction ID" value="UER00436"/>
</dbReference>
<dbReference type="Proteomes" id="UP000000684">
    <property type="component" value="Chromosome"/>
</dbReference>
<dbReference type="GO" id="GO:0005737">
    <property type="term" value="C:cytoplasm"/>
    <property type="evidence" value="ECO:0007669"/>
    <property type="project" value="UniProtKB-SubCell"/>
</dbReference>
<dbReference type="GO" id="GO:0097367">
    <property type="term" value="F:carbohydrate derivative binding"/>
    <property type="evidence" value="ECO:0007669"/>
    <property type="project" value="InterPro"/>
</dbReference>
<dbReference type="GO" id="GO:0008968">
    <property type="term" value="F:D-sedoheptulose 7-phosphate isomerase activity"/>
    <property type="evidence" value="ECO:0007669"/>
    <property type="project" value="UniProtKB-UniRule"/>
</dbReference>
<dbReference type="GO" id="GO:0008270">
    <property type="term" value="F:zinc ion binding"/>
    <property type="evidence" value="ECO:0007669"/>
    <property type="project" value="UniProtKB-UniRule"/>
</dbReference>
<dbReference type="GO" id="GO:0005975">
    <property type="term" value="P:carbohydrate metabolic process"/>
    <property type="evidence" value="ECO:0007669"/>
    <property type="project" value="UniProtKB-UniRule"/>
</dbReference>
<dbReference type="GO" id="GO:2001061">
    <property type="term" value="P:D-glycero-D-manno-heptose 7-phosphate biosynthetic process"/>
    <property type="evidence" value="ECO:0007669"/>
    <property type="project" value="UniProtKB-UniPathway"/>
</dbReference>
<dbReference type="CDD" id="cd05006">
    <property type="entry name" value="SIS_GmhA"/>
    <property type="match status" value="1"/>
</dbReference>
<dbReference type="Gene3D" id="3.40.50.10490">
    <property type="entry name" value="Glucose-6-phosphate isomerase like protein, domain 1"/>
    <property type="match status" value="1"/>
</dbReference>
<dbReference type="HAMAP" id="MF_00067">
    <property type="entry name" value="GmhA"/>
    <property type="match status" value="1"/>
</dbReference>
<dbReference type="InterPro" id="IPR035461">
    <property type="entry name" value="GmhA/DiaA"/>
</dbReference>
<dbReference type="InterPro" id="IPR004515">
    <property type="entry name" value="Phosphoheptose_Isoase"/>
</dbReference>
<dbReference type="InterPro" id="IPR001347">
    <property type="entry name" value="SIS_dom"/>
</dbReference>
<dbReference type="InterPro" id="IPR046348">
    <property type="entry name" value="SIS_dom_sf"/>
</dbReference>
<dbReference type="InterPro" id="IPR050099">
    <property type="entry name" value="SIS_GmhA/DiaA_subfam"/>
</dbReference>
<dbReference type="NCBIfam" id="NF010546">
    <property type="entry name" value="PRK13936.1"/>
    <property type="match status" value="1"/>
</dbReference>
<dbReference type="PANTHER" id="PTHR30390:SF6">
    <property type="entry name" value="DNAA INITIATOR-ASSOCIATING PROTEIN DIAA"/>
    <property type="match status" value="1"/>
</dbReference>
<dbReference type="PANTHER" id="PTHR30390">
    <property type="entry name" value="SEDOHEPTULOSE 7-PHOSPHATE ISOMERASE / DNAA INITIATOR-ASSOCIATING FACTOR FOR REPLICATION INITIATION"/>
    <property type="match status" value="1"/>
</dbReference>
<dbReference type="Pfam" id="PF13580">
    <property type="entry name" value="SIS_2"/>
    <property type="match status" value="1"/>
</dbReference>
<dbReference type="SUPFAM" id="SSF53697">
    <property type="entry name" value="SIS domain"/>
    <property type="match status" value="1"/>
</dbReference>
<dbReference type="PROSITE" id="PS51464">
    <property type="entry name" value="SIS"/>
    <property type="match status" value="1"/>
</dbReference>
<keyword id="KW-0119">Carbohydrate metabolism</keyword>
<keyword id="KW-0963">Cytoplasm</keyword>
<keyword id="KW-0413">Isomerase</keyword>
<keyword id="KW-0479">Metal-binding</keyword>
<keyword id="KW-1185">Reference proteome</keyword>
<keyword id="KW-0862">Zinc</keyword>
<protein>
    <recommendedName>
        <fullName evidence="1">Phosphoheptose isomerase</fullName>
        <ecNumber evidence="1">5.3.1.28</ecNumber>
    </recommendedName>
    <alternativeName>
        <fullName evidence="1">Sedoheptulose 7-phosphate isomerase</fullName>
    </alternativeName>
</protein>
<evidence type="ECO:0000255" key="1">
    <source>
        <dbReference type="HAMAP-Rule" id="MF_00067"/>
    </source>
</evidence>
<proteinExistence type="inferred from homology"/>
<feature type="chain" id="PRO_1000197018" description="Phosphoheptose isomerase">
    <location>
        <begin position="1"/>
        <end position="197"/>
    </location>
</feature>
<feature type="domain" description="SIS" evidence="1">
    <location>
        <begin position="34"/>
        <end position="196"/>
    </location>
</feature>
<feature type="binding site" evidence="1">
    <location>
        <begin position="49"/>
        <end position="51"/>
    </location>
    <ligand>
        <name>substrate</name>
    </ligand>
</feature>
<feature type="binding site" evidence="1">
    <location>
        <position position="58"/>
    </location>
    <ligand>
        <name>Zn(2+)</name>
        <dbReference type="ChEBI" id="CHEBI:29105"/>
    </ligand>
</feature>
<feature type="binding site" evidence="1">
    <location>
        <position position="62"/>
    </location>
    <ligand>
        <name>substrate</name>
    </ligand>
</feature>
<feature type="binding site" evidence="1">
    <location>
        <position position="62"/>
    </location>
    <ligand>
        <name>Zn(2+)</name>
        <dbReference type="ChEBI" id="CHEBI:29105"/>
    </ligand>
</feature>
<feature type="binding site" evidence="1">
    <location>
        <begin position="91"/>
        <end position="92"/>
    </location>
    <ligand>
        <name>substrate</name>
    </ligand>
</feature>
<feature type="binding site" evidence="1">
    <location>
        <begin position="117"/>
        <end position="119"/>
    </location>
    <ligand>
        <name>substrate</name>
    </ligand>
</feature>
<feature type="binding site" evidence="1">
    <location>
        <position position="122"/>
    </location>
    <ligand>
        <name>substrate</name>
    </ligand>
</feature>
<feature type="binding site" evidence="1">
    <location>
        <position position="172"/>
    </location>
    <ligand>
        <name>substrate</name>
    </ligand>
</feature>
<feature type="binding site" evidence="1">
    <location>
        <position position="172"/>
    </location>
    <ligand>
        <name>Zn(2+)</name>
        <dbReference type="ChEBI" id="CHEBI:29105"/>
    </ligand>
</feature>
<feature type="binding site" evidence="1">
    <location>
        <position position="180"/>
    </location>
    <ligand>
        <name>Zn(2+)</name>
        <dbReference type="ChEBI" id="CHEBI:29105"/>
    </ligand>
</feature>
<reference key="1">
    <citation type="submission" date="2006-08" db="EMBL/GenBank/DDBJ databases">
        <title>Complete sequence of Shewanella frigidimarina NCIMB 400.</title>
        <authorList>
            <consortium name="US DOE Joint Genome Institute"/>
            <person name="Copeland A."/>
            <person name="Lucas S."/>
            <person name="Lapidus A."/>
            <person name="Barry K."/>
            <person name="Detter J.C."/>
            <person name="Glavina del Rio T."/>
            <person name="Hammon N."/>
            <person name="Israni S."/>
            <person name="Dalin E."/>
            <person name="Tice H."/>
            <person name="Pitluck S."/>
            <person name="Fredrickson J.K."/>
            <person name="Kolker E."/>
            <person name="McCuel L.A."/>
            <person name="DiChristina T."/>
            <person name="Nealson K.H."/>
            <person name="Newman D."/>
            <person name="Tiedje J.M."/>
            <person name="Zhou J."/>
            <person name="Romine M.F."/>
            <person name="Culley D.E."/>
            <person name="Serres M."/>
            <person name="Chertkov O."/>
            <person name="Brettin T."/>
            <person name="Bruce D."/>
            <person name="Han C."/>
            <person name="Tapia R."/>
            <person name="Gilna P."/>
            <person name="Schmutz J."/>
            <person name="Larimer F."/>
            <person name="Land M."/>
            <person name="Hauser L."/>
            <person name="Kyrpides N."/>
            <person name="Mikhailova N."/>
            <person name="Richardson P."/>
        </authorList>
    </citation>
    <scope>NUCLEOTIDE SEQUENCE [LARGE SCALE GENOMIC DNA]</scope>
    <source>
        <strain>NCIMB 400</strain>
    </source>
</reference>
<gene>
    <name evidence="1" type="primary">gmhA</name>
    <name type="ordered locus">Sfri_0387</name>
</gene>